<evidence type="ECO:0000255" key="1">
    <source>
        <dbReference type="HAMAP-Rule" id="MF_01347"/>
    </source>
</evidence>
<dbReference type="EC" id="7.1.2.2" evidence="1"/>
<dbReference type="EMBL" id="FM180568">
    <property type="protein sequence ID" value="CAS11590.1"/>
    <property type="molecule type" value="Genomic_DNA"/>
</dbReference>
<dbReference type="RefSeq" id="WP_000190506.1">
    <property type="nucleotide sequence ID" value="NC_011601.1"/>
</dbReference>
<dbReference type="SMR" id="B7UMJ7"/>
<dbReference type="GeneID" id="93778235"/>
<dbReference type="KEGG" id="ecg:E2348C_4042"/>
<dbReference type="HOGENOM" id="CLU_022398_0_2_6"/>
<dbReference type="Proteomes" id="UP000008205">
    <property type="component" value="Chromosome"/>
</dbReference>
<dbReference type="GO" id="GO:0005886">
    <property type="term" value="C:plasma membrane"/>
    <property type="evidence" value="ECO:0007669"/>
    <property type="project" value="UniProtKB-SubCell"/>
</dbReference>
<dbReference type="GO" id="GO:0045259">
    <property type="term" value="C:proton-transporting ATP synthase complex"/>
    <property type="evidence" value="ECO:0007669"/>
    <property type="project" value="UniProtKB-KW"/>
</dbReference>
<dbReference type="GO" id="GO:0005524">
    <property type="term" value="F:ATP binding"/>
    <property type="evidence" value="ECO:0007669"/>
    <property type="project" value="UniProtKB-UniRule"/>
</dbReference>
<dbReference type="GO" id="GO:0016887">
    <property type="term" value="F:ATP hydrolysis activity"/>
    <property type="evidence" value="ECO:0007669"/>
    <property type="project" value="InterPro"/>
</dbReference>
<dbReference type="GO" id="GO:0046933">
    <property type="term" value="F:proton-transporting ATP synthase activity, rotational mechanism"/>
    <property type="evidence" value="ECO:0007669"/>
    <property type="project" value="UniProtKB-UniRule"/>
</dbReference>
<dbReference type="CDD" id="cd18110">
    <property type="entry name" value="ATP-synt_F1_beta_C"/>
    <property type="match status" value="1"/>
</dbReference>
<dbReference type="CDD" id="cd18115">
    <property type="entry name" value="ATP-synt_F1_beta_N"/>
    <property type="match status" value="1"/>
</dbReference>
<dbReference type="CDD" id="cd01133">
    <property type="entry name" value="F1-ATPase_beta_CD"/>
    <property type="match status" value="1"/>
</dbReference>
<dbReference type="FunFam" id="1.10.1140.10:FF:000001">
    <property type="entry name" value="ATP synthase subunit beta"/>
    <property type="match status" value="1"/>
</dbReference>
<dbReference type="FunFam" id="2.40.10.170:FF:000003">
    <property type="entry name" value="ATP synthase subunit beta"/>
    <property type="match status" value="1"/>
</dbReference>
<dbReference type="FunFam" id="3.40.50.300:FF:000004">
    <property type="entry name" value="ATP synthase subunit beta"/>
    <property type="match status" value="1"/>
</dbReference>
<dbReference type="Gene3D" id="2.40.10.170">
    <property type="match status" value="1"/>
</dbReference>
<dbReference type="Gene3D" id="1.10.1140.10">
    <property type="entry name" value="Bovine Mitochondrial F1-atpase, Atp Synthase Beta Chain, Chain D, domain 3"/>
    <property type="match status" value="1"/>
</dbReference>
<dbReference type="Gene3D" id="3.40.50.300">
    <property type="entry name" value="P-loop containing nucleotide triphosphate hydrolases"/>
    <property type="match status" value="1"/>
</dbReference>
<dbReference type="HAMAP" id="MF_01347">
    <property type="entry name" value="ATP_synth_beta_bact"/>
    <property type="match status" value="1"/>
</dbReference>
<dbReference type="InterPro" id="IPR003593">
    <property type="entry name" value="AAA+_ATPase"/>
</dbReference>
<dbReference type="InterPro" id="IPR055190">
    <property type="entry name" value="ATP-synt_VA_C"/>
</dbReference>
<dbReference type="InterPro" id="IPR005722">
    <property type="entry name" value="ATP_synth_F1_bsu"/>
</dbReference>
<dbReference type="InterPro" id="IPR020003">
    <property type="entry name" value="ATPase_a/bsu_AS"/>
</dbReference>
<dbReference type="InterPro" id="IPR050053">
    <property type="entry name" value="ATPase_alpha/beta_chains"/>
</dbReference>
<dbReference type="InterPro" id="IPR004100">
    <property type="entry name" value="ATPase_F1/V1/A1_a/bsu_N"/>
</dbReference>
<dbReference type="InterPro" id="IPR036121">
    <property type="entry name" value="ATPase_F1/V1/A1_a/bsu_N_sf"/>
</dbReference>
<dbReference type="InterPro" id="IPR000194">
    <property type="entry name" value="ATPase_F1/V1/A1_a/bsu_nucl-bd"/>
</dbReference>
<dbReference type="InterPro" id="IPR024034">
    <property type="entry name" value="ATPase_F1/V1_b/a_C"/>
</dbReference>
<dbReference type="InterPro" id="IPR027417">
    <property type="entry name" value="P-loop_NTPase"/>
</dbReference>
<dbReference type="NCBIfam" id="TIGR01039">
    <property type="entry name" value="atpD"/>
    <property type="match status" value="1"/>
</dbReference>
<dbReference type="PANTHER" id="PTHR15184">
    <property type="entry name" value="ATP SYNTHASE"/>
    <property type="match status" value="1"/>
</dbReference>
<dbReference type="PANTHER" id="PTHR15184:SF71">
    <property type="entry name" value="ATP SYNTHASE SUBUNIT BETA, MITOCHONDRIAL"/>
    <property type="match status" value="1"/>
</dbReference>
<dbReference type="Pfam" id="PF00006">
    <property type="entry name" value="ATP-synt_ab"/>
    <property type="match status" value="1"/>
</dbReference>
<dbReference type="Pfam" id="PF02874">
    <property type="entry name" value="ATP-synt_ab_N"/>
    <property type="match status" value="1"/>
</dbReference>
<dbReference type="Pfam" id="PF22919">
    <property type="entry name" value="ATP-synt_VA_C"/>
    <property type="match status" value="1"/>
</dbReference>
<dbReference type="SMART" id="SM00382">
    <property type="entry name" value="AAA"/>
    <property type="match status" value="1"/>
</dbReference>
<dbReference type="SUPFAM" id="SSF47917">
    <property type="entry name" value="C-terminal domain of alpha and beta subunits of F1 ATP synthase"/>
    <property type="match status" value="1"/>
</dbReference>
<dbReference type="SUPFAM" id="SSF50615">
    <property type="entry name" value="N-terminal domain of alpha and beta subunits of F1 ATP synthase"/>
    <property type="match status" value="1"/>
</dbReference>
<dbReference type="SUPFAM" id="SSF52540">
    <property type="entry name" value="P-loop containing nucleoside triphosphate hydrolases"/>
    <property type="match status" value="1"/>
</dbReference>
<dbReference type="PROSITE" id="PS00152">
    <property type="entry name" value="ATPASE_ALPHA_BETA"/>
    <property type="match status" value="1"/>
</dbReference>
<proteinExistence type="inferred from homology"/>
<reference key="1">
    <citation type="journal article" date="2009" name="J. Bacteriol.">
        <title>Complete genome sequence and comparative genome analysis of enteropathogenic Escherichia coli O127:H6 strain E2348/69.</title>
        <authorList>
            <person name="Iguchi A."/>
            <person name="Thomson N.R."/>
            <person name="Ogura Y."/>
            <person name="Saunders D."/>
            <person name="Ooka T."/>
            <person name="Henderson I.R."/>
            <person name="Harris D."/>
            <person name="Asadulghani M."/>
            <person name="Kurokawa K."/>
            <person name="Dean P."/>
            <person name="Kenny B."/>
            <person name="Quail M.A."/>
            <person name="Thurston S."/>
            <person name="Dougan G."/>
            <person name="Hayashi T."/>
            <person name="Parkhill J."/>
            <person name="Frankel G."/>
        </authorList>
    </citation>
    <scope>NUCLEOTIDE SEQUENCE [LARGE SCALE GENOMIC DNA]</scope>
    <source>
        <strain>E2348/69 / EPEC</strain>
    </source>
</reference>
<feature type="chain" id="PRO_1000166589" description="ATP synthase subunit beta">
    <location>
        <begin position="1"/>
        <end position="460"/>
    </location>
</feature>
<feature type="binding site" evidence="1">
    <location>
        <begin position="150"/>
        <end position="157"/>
    </location>
    <ligand>
        <name>ATP</name>
        <dbReference type="ChEBI" id="CHEBI:30616"/>
    </ligand>
</feature>
<keyword id="KW-0066">ATP synthesis</keyword>
<keyword id="KW-0067">ATP-binding</keyword>
<keyword id="KW-0997">Cell inner membrane</keyword>
<keyword id="KW-1003">Cell membrane</keyword>
<keyword id="KW-0139">CF(1)</keyword>
<keyword id="KW-0375">Hydrogen ion transport</keyword>
<keyword id="KW-0406">Ion transport</keyword>
<keyword id="KW-0472">Membrane</keyword>
<keyword id="KW-0547">Nucleotide-binding</keyword>
<keyword id="KW-1185">Reference proteome</keyword>
<keyword id="KW-1278">Translocase</keyword>
<keyword id="KW-0813">Transport</keyword>
<accession>B7UMJ7</accession>
<sequence>MATGKIVQVIGAVVDVEFPQDAVPRVYDALEVQNGNERLVLEVQQQLGGGIVRTIAMGSSDGLRRGLDVKDLEHPIEVPVGKATLGRIMNVLGEPVDMKGEIGEEERWAIHRAAPSYEELSNSQELLETGIKVIDLMCPFAKGGKVGLFGGAGVGKTVNMMELIRNIAIEHSGYSVFAGVGERTREGNDFYHEMTDSNVIDKVSLVYGQMNEPPGNRLRVALTGLTMAEKFRDEGRDVLLFVDNIYRYTLAGTEVSALLGRMPSAVGYQPTLAEEMGVLQERITSTKTGSITSVQAVYVPADDLTDPSPATTFAHLDATVVLSRQIASLGIYPAVDPLDSTSRQLDPLVVGQEHYDTARGVQSILQRYQELKDIIAILGMDELSEEDKLVVARARKIQRFLSQPFFVAEVFTGSPGKYVSLKDTIRGFKGIMEGEYDHLPEQAFYMVGSIEEAVEKAKKL</sequence>
<name>ATPB_ECO27</name>
<gene>
    <name evidence="1" type="primary">atpD</name>
    <name type="ordered locus">E2348C_4042</name>
</gene>
<organism>
    <name type="scientific">Escherichia coli O127:H6 (strain E2348/69 / EPEC)</name>
    <dbReference type="NCBI Taxonomy" id="574521"/>
    <lineage>
        <taxon>Bacteria</taxon>
        <taxon>Pseudomonadati</taxon>
        <taxon>Pseudomonadota</taxon>
        <taxon>Gammaproteobacteria</taxon>
        <taxon>Enterobacterales</taxon>
        <taxon>Enterobacteriaceae</taxon>
        <taxon>Escherichia</taxon>
    </lineage>
</organism>
<comment type="function">
    <text evidence="1">Produces ATP from ADP in the presence of a proton gradient across the membrane. The catalytic sites are hosted primarily by the beta subunits.</text>
</comment>
<comment type="catalytic activity">
    <reaction evidence="1">
        <text>ATP + H2O + 4 H(+)(in) = ADP + phosphate + 5 H(+)(out)</text>
        <dbReference type="Rhea" id="RHEA:57720"/>
        <dbReference type="ChEBI" id="CHEBI:15377"/>
        <dbReference type="ChEBI" id="CHEBI:15378"/>
        <dbReference type="ChEBI" id="CHEBI:30616"/>
        <dbReference type="ChEBI" id="CHEBI:43474"/>
        <dbReference type="ChEBI" id="CHEBI:456216"/>
        <dbReference type="EC" id="7.1.2.2"/>
    </reaction>
</comment>
<comment type="subunit">
    <text evidence="1">F-type ATPases have 2 components, CF(1) - the catalytic core - and CF(0) - the membrane proton channel. CF(1) has five subunits: alpha(3), beta(3), gamma(1), delta(1), epsilon(1). CF(0) has three main subunits: a(1), b(2) and c(9-12). The alpha and beta chains form an alternating ring which encloses part of the gamma chain. CF(1) is attached to CF(0) by a central stalk formed by the gamma and epsilon chains, while a peripheral stalk is formed by the delta and b chains.</text>
</comment>
<comment type="subcellular location">
    <subcellularLocation>
        <location evidence="1">Cell inner membrane</location>
        <topology evidence="1">Peripheral membrane protein</topology>
    </subcellularLocation>
</comment>
<comment type="similarity">
    <text evidence="1">Belongs to the ATPase alpha/beta chains family.</text>
</comment>
<protein>
    <recommendedName>
        <fullName evidence="1">ATP synthase subunit beta</fullName>
        <ecNumber evidence="1">7.1.2.2</ecNumber>
    </recommendedName>
    <alternativeName>
        <fullName evidence="1">ATP synthase F1 sector subunit beta</fullName>
    </alternativeName>
    <alternativeName>
        <fullName evidence="1">F-ATPase subunit beta</fullName>
    </alternativeName>
</protein>